<proteinExistence type="evidence at protein level"/>
<reference key="1">
    <citation type="journal article" date="1998" name="Gene">
        <title>Mouse annexin III cDNA, genetic mapping and evolution.</title>
        <authorList>
            <person name="Fernandez M.-P."/>
            <person name="Copeland N.G."/>
            <person name="Gilbert D.J."/>
            <person name="Jenkins N.A."/>
            <person name="Morgan R.O."/>
        </authorList>
    </citation>
    <scope>NUCLEOTIDE SEQUENCE [MRNA]</scope>
    <source>
        <strain>C57BL/6J</strain>
    </source>
</reference>
<reference key="2">
    <citation type="journal article" date="2005" name="Science">
        <title>The transcriptional landscape of the mammalian genome.</title>
        <authorList>
            <person name="Carninci P."/>
            <person name="Kasukawa T."/>
            <person name="Katayama S."/>
            <person name="Gough J."/>
            <person name="Frith M.C."/>
            <person name="Maeda N."/>
            <person name="Oyama R."/>
            <person name="Ravasi T."/>
            <person name="Lenhard B."/>
            <person name="Wells C."/>
            <person name="Kodzius R."/>
            <person name="Shimokawa K."/>
            <person name="Bajic V.B."/>
            <person name="Brenner S.E."/>
            <person name="Batalov S."/>
            <person name="Forrest A.R."/>
            <person name="Zavolan M."/>
            <person name="Davis M.J."/>
            <person name="Wilming L.G."/>
            <person name="Aidinis V."/>
            <person name="Allen J.E."/>
            <person name="Ambesi-Impiombato A."/>
            <person name="Apweiler R."/>
            <person name="Aturaliya R.N."/>
            <person name="Bailey T.L."/>
            <person name="Bansal M."/>
            <person name="Baxter L."/>
            <person name="Beisel K.W."/>
            <person name="Bersano T."/>
            <person name="Bono H."/>
            <person name="Chalk A.M."/>
            <person name="Chiu K.P."/>
            <person name="Choudhary V."/>
            <person name="Christoffels A."/>
            <person name="Clutterbuck D.R."/>
            <person name="Crowe M.L."/>
            <person name="Dalla E."/>
            <person name="Dalrymple B.P."/>
            <person name="de Bono B."/>
            <person name="Della Gatta G."/>
            <person name="di Bernardo D."/>
            <person name="Down T."/>
            <person name="Engstrom P."/>
            <person name="Fagiolini M."/>
            <person name="Faulkner G."/>
            <person name="Fletcher C.F."/>
            <person name="Fukushima T."/>
            <person name="Furuno M."/>
            <person name="Futaki S."/>
            <person name="Gariboldi M."/>
            <person name="Georgii-Hemming P."/>
            <person name="Gingeras T.R."/>
            <person name="Gojobori T."/>
            <person name="Green R.E."/>
            <person name="Gustincich S."/>
            <person name="Harbers M."/>
            <person name="Hayashi Y."/>
            <person name="Hensch T.K."/>
            <person name="Hirokawa N."/>
            <person name="Hill D."/>
            <person name="Huminiecki L."/>
            <person name="Iacono M."/>
            <person name="Ikeo K."/>
            <person name="Iwama A."/>
            <person name="Ishikawa T."/>
            <person name="Jakt M."/>
            <person name="Kanapin A."/>
            <person name="Katoh M."/>
            <person name="Kawasawa Y."/>
            <person name="Kelso J."/>
            <person name="Kitamura H."/>
            <person name="Kitano H."/>
            <person name="Kollias G."/>
            <person name="Krishnan S.P."/>
            <person name="Kruger A."/>
            <person name="Kummerfeld S.K."/>
            <person name="Kurochkin I.V."/>
            <person name="Lareau L.F."/>
            <person name="Lazarevic D."/>
            <person name="Lipovich L."/>
            <person name="Liu J."/>
            <person name="Liuni S."/>
            <person name="McWilliam S."/>
            <person name="Madan Babu M."/>
            <person name="Madera M."/>
            <person name="Marchionni L."/>
            <person name="Matsuda H."/>
            <person name="Matsuzawa S."/>
            <person name="Miki H."/>
            <person name="Mignone F."/>
            <person name="Miyake S."/>
            <person name="Morris K."/>
            <person name="Mottagui-Tabar S."/>
            <person name="Mulder N."/>
            <person name="Nakano N."/>
            <person name="Nakauchi H."/>
            <person name="Ng P."/>
            <person name="Nilsson R."/>
            <person name="Nishiguchi S."/>
            <person name="Nishikawa S."/>
            <person name="Nori F."/>
            <person name="Ohara O."/>
            <person name="Okazaki Y."/>
            <person name="Orlando V."/>
            <person name="Pang K.C."/>
            <person name="Pavan W.J."/>
            <person name="Pavesi G."/>
            <person name="Pesole G."/>
            <person name="Petrovsky N."/>
            <person name="Piazza S."/>
            <person name="Reed J."/>
            <person name="Reid J.F."/>
            <person name="Ring B.Z."/>
            <person name="Ringwald M."/>
            <person name="Rost B."/>
            <person name="Ruan Y."/>
            <person name="Salzberg S.L."/>
            <person name="Sandelin A."/>
            <person name="Schneider C."/>
            <person name="Schoenbach C."/>
            <person name="Sekiguchi K."/>
            <person name="Semple C.A."/>
            <person name="Seno S."/>
            <person name="Sessa L."/>
            <person name="Sheng Y."/>
            <person name="Shibata Y."/>
            <person name="Shimada H."/>
            <person name="Shimada K."/>
            <person name="Silva D."/>
            <person name="Sinclair B."/>
            <person name="Sperling S."/>
            <person name="Stupka E."/>
            <person name="Sugiura K."/>
            <person name="Sultana R."/>
            <person name="Takenaka Y."/>
            <person name="Taki K."/>
            <person name="Tammoja K."/>
            <person name="Tan S.L."/>
            <person name="Tang S."/>
            <person name="Taylor M.S."/>
            <person name="Tegner J."/>
            <person name="Teichmann S.A."/>
            <person name="Ueda H.R."/>
            <person name="van Nimwegen E."/>
            <person name="Verardo R."/>
            <person name="Wei C.L."/>
            <person name="Yagi K."/>
            <person name="Yamanishi H."/>
            <person name="Zabarovsky E."/>
            <person name="Zhu S."/>
            <person name="Zimmer A."/>
            <person name="Hide W."/>
            <person name="Bult C."/>
            <person name="Grimmond S.M."/>
            <person name="Teasdale R.D."/>
            <person name="Liu E.T."/>
            <person name="Brusic V."/>
            <person name="Quackenbush J."/>
            <person name="Wahlestedt C."/>
            <person name="Mattick J.S."/>
            <person name="Hume D.A."/>
            <person name="Kai C."/>
            <person name="Sasaki D."/>
            <person name="Tomaru Y."/>
            <person name="Fukuda S."/>
            <person name="Kanamori-Katayama M."/>
            <person name="Suzuki M."/>
            <person name="Aoki J."/>
            <person name="Arakawa T."/>
            <person name="Iida J."/>
            <person name="Imamura K."/>
            <person name="Itoh M."/>
            <person name="Kato T."/>
            <person name="Kawaji H."/>
            <person name="Kawagashira N."/>
            <person name="Kawashima T."/>
            <person name="Kojima M."/>
            <person name="Kondo S."/>
            <person name="Konno H."/>
            <person name="Nakano K."/>
            <person name="Ninomiya N."/>
            <person name="Nishio T."/>
            <person name="Okada M."/>
            <person name="Plessy C."/>
            <person name="Shibata K."/>
            <person name="Shiraki T."/>
            <person name="Suzuki S."/>
            <person name="Tagami M."/>
            <person name="Waki K."/>
            <person name="Watahiki A."/>
            <person name="Okamura-Oho Y."/>
            <person name="Suzuki H."/>
            <person name="Kawai J."/>
            <person name="Hayashizaki Y."/>
        </authorList>
    </citation>
    <scope>NUCLEOTIDE SEQUENCE [LARGE SCALE MRNA]</scope>
    <source>
        <strain>C57BL/6J</strain>
        <tissue>Amnion</tissue>
        <tissue>Bone marrow</tissue>
        <tissue>Liver</tissue>
    </source>
</reference>
<reference key="3">
    <citation type="journal article" date="2004" name="Genome Res.">
        <title>The status, quality, and expansion of the NIH full-length cDNA project: the Mammalian Gene Collection (MGC).</title>
        <authorList>
            <consortium name="The MGC Project Team"/>
        </authorList>
    </citation>
    <scope>NUCLEOTIDE SEQUENCE [LARGE SCALE MRNA]</scope>
    <source>
        <strain>C57BL/6J</strain>
        <tissue>Eye</tissue>
    </source>
</reference>
<reference key="4">
    <citation type="journal article" date="2010" name="Cell">
        <title>A tissue-specific atlas of mouse protein phosphorylation and expression.</title>
        <authorList>
            <person name="Huttlin E.L."/>
            <person name="Jedrychowski M.P."/>
            <person name="Elias J.E."/>
            <person name="Goswami T."/>
            <person name="Rad R."/>
            <person name="Beausoleil S.A."/>
            <person name="Villen J."/>
            <person name="Haas W."/>
            <person name="Sowa M.E."/>
            <person name="Gygi S.P."/>
        </authorList>
    </citation>
    <scope>IDENTIFICATION BY MASS SPECTROMETRY [LARGE SCALE ANALYSIS]</scope>
    <source>
        <tissue>Brain</tissue>
        <tissue>Brown adipose tissue</tissue>
        <tissue>Heart</tissue>
        <tissue>Kidney</tissue>
        <tissue>Liver</tissue>
        <tissue>Lung</tissue>
        <tissue>Pancreas</tissue>
        <tissue>Spleen</tissue>
        <tissue>Testis</tissue>
    </source>
</reference>
<reference key="5">
    <citation type="journal article" date="2013" name="Mol. Cell">
        <title>SIRT5-mediated lysine desuccinylation impacts diverse metabolic pathways.</title>
        <authorList>
            <person name="Park J."/>
            <person name="Chen Y."/>
            <person name="Tishkoff D.X."/>
            <person name="Peng C."/>
            <person name="Tan M."/>
            <person name="Dai L."/>
            <person name="Xie Z."/>
            <person name="Zhang Y."/>
            <person name="Zwaans B.M."/>
            <person name="Skinner M.E."/>
            <person name="Lombard D.B."/>
            <person name="Zhao Y."/>
        </authorList>
    </citation>
    <scope>ACETYLATION [LARGE SCALE ANALYSIS] AT LYS-177</scope>
    <scope>IDENTIFICATION BY MASS SPECTROMETRY [LARGE SCALE ANALYSIS]</scope>
    <source>
        <tissue>Embryonic fibroblast</tissue>
    </source>
</reference>
<evidence type="ECO:0000250" key="1">
    <source>
        <dbReference type="UniProtKB" id="P12429"/>
    </source>
</evidence>
<evidence type="ECO:0000250" key="2">
    <source>
        <dbReference type="UniProtKB" id="P14669"/>
    </source>
</evidence>
<evidence type="ECO:0000255" key="3">
    <source>
        <dbReference type="PROSITE-ProRule" id="PRU01245"/>
    </source>
</evidence>
<evidence type="ECO:0000305" key="4"/>
<evidence type="ECO:0007744" key="5">
    <source>
    </source>
</evidence>
<feature type="initiator methionine" description="Removed" evidence="1">
    <location>
        <position position="1"/>
    </location>
</feature>
<feature type="chain" id="PRO_0000067478" description="Annexin A3">
    <location>
        <begin position="2"/>
        <end position="323"/>
    </location>
</feature>
<feature type="repeat" description="Annexin 1" evidence="3">
    <location>
        <begin position="18"/>
        <end position="89"/>
    </location>
</feature>
<feature type="repeat" description="Annexin 2" evidence="3">
    <location>
        <begin position="90"/>
        <end position="161"/>
    </location>
</feature>
<feature type="repeat" description="Annexin 3" evidence="3">
    <location>
        <begin position="173"/>
        <end position="245"/>
    </location>
</feature>
<feature type="repeat" description="Annexin 4" evidence="3">
    <location>
        <begin position="249"/>
        <end position="320"/>
    </location>
</feature>
<feature type="modified residue" description="N-acetylalanine" evidence="1">
    <location>
        <position position="2"/>
    </location>
</feature>
<feature type="modified residue" description="N6-acetyllysine" evidence="5">
    <location>
        <position position="177"/>
    </location>
</feature>
<feature type="modified residue" description="Phosphothreonine" evidence="2">
    <location>
        <position position="267"/>
    </location>
</feature>
<feature type="sequence conflict" description="In Ref. 1; CAA04887." evidence="4" ref="1">
    <original>KQ</original>
    <variation>NE</variation>
    <location>
        <begin position="97"/>
        <end position="98"/>
    </location>
</feature>
<sequence length="323" mass="36384">MASIWVGPRGTIKDYPGFSPSVDAEAIRKAIRGLGTDEKTLINILTERSNAQRQLIVKQYQAAYEQELKDDLKGDLSGHFEHVMVALVTAPALFDAKQLKKSMKGTGTDEDALIEILTTRSSRQMKEISQAYYTVYKKSLGDDISSETSGDFRKALLTLADGRRDESLKVDEHLAKKDAQILYNAGENKWGTDEDKFTEVLCLRSFPQLKLTFDEYRNISQKDIEDSIKGELSGHFEDLLLAIVHCARNTPAFLAERLHQALKGAGTDEFTLNRIMVSRSEIDLLDIRHEFKKHYGYSLYSAIQSDTSGDYRTVLLKICGEDD</sequence>
<keyword id="KW-0007">Acetylation</keyword>
<keyword id="KW-0041">Annexin</keyword>
<keyword id="KW-0106">Calcium</keyword>
<keyword id="KW-0111">Calcium/phospholipid-binding</keyword>
<keyword id="KW-0593">Phospholipase A2 inhibitor</keyword>
<keyword id="KW-0597">Phosphoprotein</keyword>
<keyword id="KW-1185">Reference proteome</keyword>
<keyword id="KW-0677">Repeat</keyword>
<protein>
    <recommendedName>
        <fullName>Annexin A3</fullName>
    </recommendedName>
    <alternativeName>
        <fullName>35-alpha calcimedin</fullName>
    </alternativeName>
    <alternativeName>
        <fullName>Annexin III</fullName>
    </alternativeName>
    <alternativeName>
        <fullName>Annexin-3</fullName>
    </alternativeName>
    <alternativeName>
        <fullName>Lipocortin III</fullName>
    </alternativeName>
    <alternativeName>
        <fullName>Placental anticoagulant protein III</fullName>
        <shortName>PAP-III</shortName>
    </alternativeName>
</protein>
<comment type="function">
    <text>Inhibitor of phospholipase A2, also possesses anti-coagulant properties.</text>
</comment>
<comment type="domain">
    <text>A pair of annexin repeats may form one binding site for calcium and phospholipid.</text>
</comment>
<comment type="similarity">
    <text evidence="3 4">Belongs to the annexin family.</text>
</comment>
<name>ANXA3_MOUSE</name>
<dbReference type="EMBL" id="AJ001633">
    <property type="protein sequence ID" value="CAA04887.1"/>
    <property type="molecule type" value="mRNA"/>
</dbReference>
<dbReference type="EMBL" id="AK150922">
    <property type="protein sequence ID" value="BAE29960.1"/>
    <property type="molecule type" value="mRNA"/>
</dbReference>
<dbReference type="EMBL" id="AK150951">
    <property type="protein sequence ID" value="BAE29984.1"/>
    <property type="molecule type" value="mRNA"/>
</dbReference>
<dbReference type="EMBL" id="AK151771">
    <property type="protein sequence ID" value="BAE30677.1"/>
    <property type="molecule type" value="mRNA"/>
</dbReference>
<dbReference type="EMBL" id="AK152863">
    <property type="protein sequence ID" value="BAE31554.1"/>
    <property type="molecule type" value="mRNA"/>
</dbReference>
<dbReference type="EMBL" id="AK168396">
    <property type="protein sequence ID" value="BAE40320.1"/>
    <property type="molecule type" value="mRNA"/>
</dbReference>
<dbReference type="EMBL" id="AK168507">
    <property type="protein sequence ID" value="BAE40390.1"/>
    <property type="molecule type" value="mRNA"/>
</dbReference>
<dbReference type="EMBL" id="BC090634">
    <property type="protein sequence ID" value="AAH90634.1"/>
    <property type="molecule type" value="mRNA"/>
</dbReference>
<dbReference type="CCDS" id="CCDS51568.1"/>
<dbReference type="RefSeq" id="NP_001407036.1">
    <property type="nucleotide sequence ID" value="NM_001420107.1"/>
</dbReference>
<dbReference type="RefSeq" id="NP_001407037.1">
    <property type="nucleotide sequence ID" value="NM_001420108.1"/>
</dbReference>
<dbReference type="RefSeq" id="NP_038498.2">
    <property type="nucleotide sequence ID" value="NM_013470.3"/>
</dbReference>
<dbReference type="SMR" id="O35639"/>
<dbReference type="BioGRID" id="198109">
    <property type="interactions" value="3"/>
</dbReference>
<dbReference type="FunCoup" id="O35639">
    <property type="interactions" value="313"/>
</dbReference>
<dbReference type="IntAct" id="O35639">
    <property type="interactions" value="1"/>
</dbReference>
<dbReference type="STRING" id="10090.ENSMUSP00000031447"/>
<dbReference type="GlyGen" id="O35639">
    <property type="glycosylation" value="1 site, 1 O-linked glycan (1 site)"/>
</dbReference>
<dbReference type="iPTMnet" id="O35639"/>
<dbReference type="PhosphoSitePlus" id="O35639"/>
<dbReference type="REPRODUCTION-2DPAGE" id="O35639"/>
<dbReference type="jPOST" id="O35639"/>
<dbReference type="PaxDb" id="10090-ENSMUSP00000031447"/>
<dbReference type="PeptideAtlas" id="O35639"/>
<dbReference type="ProteomicsDB" id="281775"/>
<dbReference type="Antibodypedia" id="2890">
    <property type="antibodies" value="617 antibodies from 35 providers"/>
</dbReference>
<dbReference type="DNASU" id="11745"/>
<dbReference type="Ensembl" id="ENSMUST00000031447.12">
    <property type="protein sequence ID" value="ENSMUSP00000031447.8"/>
    <property type="gene ID" value="ENSMUSG00000029484.13"/>
</dbReference>
<dbReference type="GeneID" id="11745"/>
<dbReference type="KEGG" id="mmu:11745"/>
<dbReference type="UCSC" id="uc008yfm.2">
    <property type="organism name" value="mouse"/>
</dbReference>
<dbReference type="AGR" id="MGI:1201378"/>
<dbReference type="CTD" id="306"/>
<dbReference type="MGI" id="MGI:1201378">
    <property type="gene designation" value="Anxa3"/>
</dbReference>
<dbReference type="VEuPathDB" id="HostDB:ENSMUSG00000029484"/>
<dbReference type="eggNOG" id="KOG0819">
    <property type="taxonomic scope" value="Eukaryota"/>
</dbReference>
<dbReference type="GeneTree" id="ENSGT00940000159174"/>
<dbReference type="HOGENOM" id="CLU_025300_0_0_1"/>
<dbReference type="InParanoid" id="O35639"/>
<dbReference type="OMA" id="DYNSRFM"/>
<dbReference type="OrthoDB" id="37886at2759"/>
<dbReference type="PhylomeDB" id="O35639"/>
<dbReference type="TreeFam" id="TF105452"/>
<dbReference type="BioGRID-ORCS" id="11745">
    <property type="hits" value="2 hits in 81 CRISPR screens"/>
</dbReference>
<dbReference type="ChiTaRS" id="Anxa3">
    <property type="organism name" value="mouse"/>
</dbReference>
<dbReference type="PRO" id="PR:O35639"/>
<dbReference type="Proteomes" id="UP000000589">
    <property type="component" value="Chromosome 5"/>
</dbReference>
<dbReference type="RNAct" id="O35639">
    <property type="molecule type" value="protein"/>
</dbReference>
<dbReference type="Bgee" id="ENSMUSG00000029484">
    <property type="expression patterns" value="Expressed in right lung lobe and 254 other cell types or tissues"/>
</dbReference>
<dbReference type="ExpressionAtlas" id="O35639">
    <property type="expression patterns" value="baseline and differential"/>
</dbReference>
<dbReference type="GO" id="GO:0062023">
    <property type="term" value="C:collagen-containing extracellular matrix"/>
    <property type="evidence" value="ECO:0007005"/>
    <property type="project" value="BHF-UCL"/>
</dbReference>
<dbReference type="GO" id="GO:0030670">
    <property type="term" value="C:phagocytic vesicle membrane"/>
    <property type="evidence" value="ECO:0007669"/>
    <property type="project" value="Ensembl"/>
</dbReference>
<dbReference type="GO" id="GO:0005886">
    <property type="term" value="C:plasma membrane"/>
    <property type="evidence" value="ECO:0007669"/>
    <property type="project" value="Ensembl"/>
</dbReference>
<dbReference type="GO" id="GO:0042581">
    <property type="term" value="C:specific granule"/>
    <property type="evidence" value="ECO:0007669"/>
    <property type="project" value="Ensembl"/>
</dbReference>
<dbReference type="GO" id="GO:0005509">
    <property type="term" value="F:calcium ion binding"/>
    <property type="evidence" value="ECO:0007669"/>
    <property type="project" value="InterPro"/>
</dbReference>
<dbReference type="GO" id="GO:0005544">
    <property type="term" value="F:calcium-dependent phospholipid binding"/>
    <property type="evidence" value="ECO:0007669"/>
    <property type="project" value="UniProtKB-KW"/>
</dbReference>
<dbReference type="GO" id="GO:0048306">
    <property type="term" value="F:calcium-dependent protein binding"/>
    <property type="evidence" value="ECO:0007669"/>
    <property type="project" value="Ensembl"/>
</dbReference>
<dbReference type="GO" id="GO:0019834">
    <property type="term" value="F:phospholipase A2 inhibitor activity"/>
    <property type="evidence" value="ECO:0007669"/>
    <property type="project" value="UniProtKB-KW"/>
</dbReference>
<dbReference type="GO" id="GO:0042742">
    <property type="term" value="P:defense response to bacterium"/>
    <property type="evidence" value="ECO:0007669"/>
    <property type="project" value="Ensembl"/>
</dbReference>
<dbReference type="GO" id="GO:0043312">
    <property type="term" value="P:neutrophil degranulation"/>
    <property type="evidence" value="ECO:0007669"/>
    <property type="project" value="Ensembl"/>
</dbReference>
<dbReference type="GO" id="GO:0006909">
    <property type="term" value="P:phagocytosis"/>
    <property type="evidence" value="ECO:0007669"/>
    <property type="project" value="Ensembl"/>
</dbReference>
<dbReference type="GO" id="GO:0045766">
    <property type="term" value="P:positive regulation of angiogenesis"/>
    <property type="evidence" value="ECO:0007669"/>
    <property type="project" value="Ensembl"/>
</dbReference>
<dbReference type="GO" id="GO:0010595">
    <property type="term" value="P:positive regulation of endothelial cell migration"/>
    <property type="evidence" value="ECO:0007669"/>
    <property type="project" value="Ensembl"/>
</dbReference>
<dbReference type="FunFam" id="1.10.220.10:FF:000002">
    <property type="entry name" value="Annexin"/>
    <property type="match status" value="1"/>
</dbReference>
<dbReference type="FunFam" id="1.10.220.10:FF:000003">
    <property type="entry name" value="Annexin"/>
    <property type="match status" value="1"/>
</dbReference>
<dbReference type="FunFam" id="1.10.220.10:FF:000004">
    <property type="entry name" value="Annexin"/>
    <property type="match status" value="1"/>
</dbReference>
<dbReference type="FunFam" id="1.10.220.10:FF:000022">
    <property type="entry name" value="Annexin A5"/>
    <property type="match status" value="1"/>
</dbReference>
<dbReference type="Gene3D" id="1.10.220.10">
    <property type="entry name" value="Annexin"/>
    <property type="match status" value="4"/>
</dbReference>
<dbReference type="InterPro" id="IPR001464">
    <property type="entry name" value="Annexin"/>
</dbReference>
<dbReference type="InterPro" id="IPR018502">
    <property type="entry name" value="Annexin_repeat"/>
</dbReference>
<dbReference type="InterPro" id="IPR018252">
    <property type="entry name" value="Annexin_repeat_CS"/>
</dbReference>
<dbReference type="InterPro" id="IPR037104">
    <property type="entry name" value="Annexin_sf"/>
</dbReference>
<dbReference type="InterPro" id="IPR002390">
    <property type="entry name" value="ANX3"/>
</dbReference>
<dbReference type="PANTHER" id="PTHR10502">
    <property type="entry name" value="ANNEXIN"/>
    <property type="match status" value="1"/>
</dbReference>
<dbReference type="PANTHER" id="PTHR10502:SF25">
    <property type="entry name" value="ANNEXIN A3"/>
    <property type="match status" value="1"/>
</dbReference>
<dbReference type="Pfam" id="PF00191">
    <property type="entry name" value="Annexin"/>
    <property type="match status" value="4"/>
</dbReference>
<dbReference type="PRINTS" id="PR00196">
    <property type="entry name" value="ANNEXIN"/>
</dbReference>
<dbReference type="PRINTS" id="PR00199">
    <property type="entry name" value="ANNEXINIII"/>
</dbReference>
<dbReference type="SMART" id="SM00335">
    <property type="entry name" value="ANX"/>
    <property type="match status" value="4"/>
</dbReference>
<dbReference type="SUPFAM" id="SSF47874">
    <property type="entry name" value="Annexin"/>
    <property type="match status" value="1"/>
</dbReference>
<dbReference type="PROSITE" id="PS00223">
    <property type="entry name" value="ANNEXIN_1"/>
    <property type="match status" value="4"/>
</dbReference>
<dbReference type="PROSITE" id="PS51897">
    <property type="entry name" value="ANNEXIN_2"/>
    <property type="match status" value="4"/>
</dbReference>
<organism>
    <name type="scientific">Mus musculus</name>
    <name type="common">Mouse</name>
    <dbReference type="NCBI Taxonomy" id="10090"/>
    <lineage>
        <taxon>Eukaryota</taxon>
        <taxon>Metazoa</taxon>
        <taxon>Chordata</taxon>
        <taxon>Craniata</taxon>
        <taxon>Vertebrata</taxon>
        <taxon>Euteleostomi</taxon>
        <taxon>Mammalia</taxon>
        <taxon>Eutheria</taxon>
        <taxon>Euarchontoglires</taxon>
        <taxon>Glires</taxon>
        <taxon>Rodentia</taxon>
        <taxon>Myomorpha</taxon>
        <taxon>Muroidea</taxon>
        <taxon>Muridae</taxon>
        <taxon>Murinae</taxon>
        <taxon>Mus</taxon>
        <taxon>Mus</taxon>
    </lineage>
</organism>
<accession>O35639</accession>
<accession>Q3UBI0</accession>
<gene>
    <name type="primary">Anxa3</name>
    <name type="synonym">Anx3</name>
</gene>